<reference key="1">
    <citation type="journal article" date="2004" name="Proc. Natl. Acad. Sci. U.S.A.">
        <title>Complete genomes of two clinical Staphylococcus aureus strains: evidence for the rapid evolution of virulence and drug resistance.</title>
        <authorList>
            <person name="Holden M.T.G."/>
            <person name="Feil E.J."/>
            <person name="Lindsay J.A."/>
            <person name="Peacock S.J."/>
            <person name="Day N.P.J."/>
            <person name="Enright M.C."/>
            <person name="Foster T.J."/>
            <person name="Moore C.E."/>
            <person name="Hurst L."/>
            <person name="Atkin R."/>
            <person name="Barron A."/>
            <person name="Bason N."/>
            <person name="Bentley S.D."/>
            <person name="Chillingworth C."/>
            <person name="Chillingworth T."/>
            <person name="Churcher C."/>
            <person name="Clark L."/>
            <person name="Corton C."/>
            <person name="Cronin A."/>
            <person name="Doggett J."/>
            <person name="Dowd L."/>
            <person name="Feltwell T."/>
            <person name="Hance Z."/>
            <person name="Harris B."/>
            <person name="Hauser H."/>
            <person name="Holroyd S."/>
            <person name="Jagels K."/>
            <person name="James K.D."/>
            <person name="Lennard N."/>
            <person name="Line A."/>
            <person name="Mayes R."/>
            <person name="Moule S."/>
            <person name="Mungall K."/>
            <person name="Ormond D."/>
            <person name="Quail M.A."/>
            <person name="Rabbinowitsch E."/>
            <person name="Rutherford K.M."/>
            <person name="Sanders M."/>
            <person name="Sharp S."/>
            <person name="Simmonds M."/>
            <person name="Stevens K."/>
            <person name="Whitehead S."/>
            <person name="Barrell B.G."/>
            <person name="Spratt B.G."/>
            <person name="Parkhill J."/>
        </authorList>
    </citation>
    <scope>NUCLEOTIDE SEQUENCE [LARGE SCALE GENOMIC DNA]</scope>
    <source>
        <strain>MRSA252</strain>
    </source>
</reference>
<sequence length="451" mass="52386">MTKRKLRNNWIIVTTMITFVTIFLFCLIIIFFLKDTLHNSELDDAERSSSDINNLFHSKPVKDISALDLNASLGNFQEIIIYDEHNNKLFETSNDNTVRVEPGYEHRYFDRVIKKRYKGIDYLIIKEPITTQDFKGYSLLIHSLENYDNIVKSLYIIALAFGVIATIITATISYVFSTQITKPLVSLSNKMIEIRRDGFQNKLQLNTNYEEIDNLANTFNEMMSQIEESFNQQRQFVEDASHELRTPLQIIQGHLNLIQRWGKKDPAVLEESLNISIEEMNRIIKLVEELLELTKGDVNDISSEAQTVHINDEIRSRIHSLKQLHPDYQFDTDLTSKNLEIKMKPHQFEQLFLIFIDNAIKYDVKNKKIKVKTRLKNKQKIIEITDHGIGIPEEDQDFIFDRFYRVDKSRSRSQGGNGLGLSIAQKIIQLNGGSIKIKSEINKGTTFKIIF</sequence>
<protein>
    <recommendedName>
        <fullName>Signal transduction histidine-protein kinase ArlS</fullName>
        <ecNumber>2.7.13.3</ecNumber>
    </recommendedName>
</protein>
<accession>Q6GGZ4</accession>
<gene>
    <name type="primary">arlS</name>
    <name type="ordered locus">SAR1426</name>
</gene>
<proteinExistence type="inferred from homology"/>
<evidence type="ECO:0000250" key="1"/>
<evidence type="ECO:0000255" key="2"/>
<evidence type="ECO:0000255" key="3">
    <source>
        <dbReference type="PROSITE-ProRule" id="PRU00102"/>
    </source>
</evidence>
<evidence type="ECO:0000255" key="4">
    <source>
        <dbReference type="PROSITE-ProRule" id="PRU00107"/>
    </source>
</evidence>
<comment type="function">
    <text evidence="1">Member of the two-component regulatory system ArlS/ArlR involved in the regulation of adhesion, autolysis, multidrug resistance and virulence. ArlS probably functions as a sensor protein kinase which is autophosphorylated at a histidine residue and transfers its phosphate group to ArlR (By similarity).</text>
</comment>
<comment type="catalytic activity">
    <reaction>
        <text>ATP + protein L-histidine = ADP + protein N-phospho-L-histidine.</text>
        <dbReference type="EC" id="2.7.13.3"/>
    </reaction>
</comment>
<comment type="subcellular location">
    <subcellularLocation>
        <location evidence="1">Cell membrane</location>
        <topology evidence="1">Multi-pass membrane protein</topology>
    </subcellularLocation>
</comment>
<comment type="PTM">
    <text evidence="1">Autophosphorylated.</text>
</comment>
<feature type="chain" id="PRO_0000074692" description="Signal transduction histidine-protein kinase ArlS">
    <location>
        <begin position="1"/>
        <end position="451"/>
    </location>
</feature>
<feature type="transmembrane region" description="Helical" evidence="2">
    <location>
        <begin position="11"/>
        <end position="31"/>
    </location>
</feature>
<feature type="transmembrane region" description="Helical" evidence="2">
    <location>
        <begin position="156"/>
        <end position="176"/>
    </location>
</feature>
<feature type="domain" description="HAMP" evidence="3">
    <location>
        <begin position="178"/>
        <end position="231"/>
    </location>
</feature>
<feature type="domain" description="Histidine kinase" evidence="4">
    <location>
        <begin position="239"/>
        <end position="451"/>
    </location>
</feature>
<feature type="modified residue" description="Phosphohistidine; by autocatalysis" evidence="4">
    <location>
        <position position="242"/>
    </location>
</feature>
<keyword id="KW-0067">ATP-binding</keyword>
<keyword id="KW-1003">Cell membrane</keyword>
<keyword id="KW-0418">Kinase</keyword>
<keyword id="KW-0472">Membrane</keyword>
<keyword id="KW-0547">Nucleotide-binding</keyword>
<keyword id="KW-0597">Phosphoprotein</keyword>
<keyword id="KW-0808">Transferase</keyword>
<keyword id="KW-0812">Transmembrane</keyword>
<keyword id="KW-1133">Transmembrane helix</keyword>
<keyword id="KW-0902">Two-component regulatory system</keyword>
<keyword id="KW-0843">Virulence</keyword>
<organism>
    <name type="scientific">Staphylococcus aureus (strain MRSA252)</name>
    <dbReference type="NCBI Taxonomy" id="282458"/>
    <lineage>
        <taxon>Bacteria</taxon>
        <taxon>Bacillati</taxon>
        <taxon>Bacillota</taxon>
        <taxon>Bacilli</taxon>
        <taxon>Bacillales</taxon>
        <taxon>Staphylococcaceae</taxon>
        <taxon>Staphylococcus</taxon>
    </lineage>
</organism>
<name>ARLS_STAAR</name>
<dbReference type="EC" id="2.7.13.3"/>
<dbReference type="EMBL" id="BX571856">
    <property type="protein sequence ID" value="CAG40423.1"/>
    <property type="molecule type" value="Genomic_DNA"/>
</dbReference>
<dbReference type="RefSeq" id="WP_000166793.1">
    <property type="nucleotide sequence ID" value="NC_002952.2"/>
</dbReference>
<dbReference type="SMR" id="Q6GGZ4"/>
<dbReference type="KEGG" id="sar:SAR1426"/>
<dbReference type="HOGENOM" id="CLU_000445_89_6_9"/>
<dbReference type="Proteomes" id="UP000000596">
    <property type="component" value="Chromosome"/>
</dbReference>
<dbReference type="GO" id="GO:0005886">
    <property type="term" value="C:plasma membrane"/>
    <property type="evidence" value="ECO:0007669"/>
    <property type="project" value="UniProtKB-SubCell"/>
</dbReference>
<dbReference type="GO" id="GO:0005524">
    <property type="term" value="F:ATP binding"/>
    <property type="evidence" value="ECO:0007669"/>
    <property type="project" value="UniProtKB-KW"/>
</dbReference>
<dbReference type="GO" id="GO:0000155">
    <property type="term" value="F:phosphorelay sensor kinase activity"/>
    <property type="evidence" value="ECO:0007669"/>
    <property type="project" value="InterPro"/>
</dbReference>
<dbReference type="CDD" id="cd00075">
    <property type="entry name" value="HATPase"/>
    <property type="match status" value="1"/>
</dbReference>
<dbReference type="CDD" id="cd00082">
    <property type="entry name" value="HisKA"/>
    <property type="match status" value="1"/>
</dbReference>
<dbReference type="FunFam" id="3.30.565.10:FF:000006">
    <property type="entry name" value="Sensor histidine kinase WalK"/>
    <property type="match status" value="1"/>
</dbReference>
<dbReference type="FunFam" id="1.10.287.130:FF:000001">
    <property type="entry name" value="Two-component sensor histidine kinase"/>
    <property type="match status" value="1"/>
</dbReference>
<dbReference type="Gene3D" id="1.10.287.130">
    <property type="match status" value="1"/>
</dbReference>
<dbReference type="Gene3D" id="6.10.340.10">
    <property type="match status" value="1"/>
</dbReference>
<dbReference type="Gene3D" id="3.30.565.10">
    <property type="entry name" value="Histidine kinase-like ATPase, C-terminal domain"/>
    <property type="match status" value="1"/>
</dbReference>
<dbReference type="InterPro" id="IPR041610">
    <property type="entry name" value="ArlS_N"/>
</dbReference>
<dbReference type="InterPro" id="IPR050398">
    <property type="entry name" value="Bact_Sensor_His_Kinase"/>
</dbReference>
<dbReference type="InterPro" id="IPR003660">
    <property type="entry name" value="HAMP_dom"/>
</dbReference>
<dbReference type="InterPro" id="IPR036890">
    <property type="entry name" value="HATPase_C_sf"/>
</dbReference>
<dbReference type="InterPro" id="IPR005467">
    <property type="entry name" value="His_kinase_dom"/>
</dbReference>
<dbReference type="InterPro" id="IPR003661">
    <property type="entry name" value="HisK_dim/P_dom"/>
</dbReference>
<dbReference type="InterPro" id="IPR036097">
    <property type="entry name" value="HisK_dim/P_sf"/>
</dbReference>
<dbReference type="InterPro" id="IPR004358">
    <property type="entry name" value="Sig_transdc_His_kin-like_C"/>
</dbReference>
<dbReference type="PANTHER" id="PTHR45528:SF12">
    <property type="entry name" value="SENSOR HISTIDINE KINASE ARSS"/>
    <property type="match status" value="1"/>
</dbReference>
<dbReference type="PANTHER" id="PTHR45528">
    <property type="entry name" value="SENSOR HISTIDINE KINASE CPXA"/>
    <property type="match status" value="1"/>
</dbReference>
<dbReference type="Pfam" id="PF18719">
    <property type="entry name" value="ArlS_N"/>
    <property type="match status" value="1"/>
</dbReference>
<dbReference type="Pfam" id="PF02518">
    <property type="entry name" value="HATPase_c"/>
    <property type="match status" value="1"/>
</dbReference>
<dbReference type="Pfam" id="PF00512">
    <property type="entry name" value="HisKA"/>
    <property type="match status" value="1"/>
</dbReference>
<dbReference type="PRINTS" id="PR00344">
    <property type="entry name" value="BCTRLSENSOR"/>
</dbReference>
<dbReference type="SMART" id="SM00387">
    <property type="entry name" value="HATPase_c"/>
    <property type="match status" value="1"/>
</dbReference>
<dbReference type="SMART" id="SM00388">
    <property type="entry name" value="HisKA"/>
    <property type="match status" value="1"/>
</dbReference>
<dbReference type="SUPFAM" id="SSF55874">
    <property type="entry name" value="ATPase domain of HSP90 chaperone/DNA topoisomerase II/histidine kinase"/>
    <property type="match status" value="1"/>
</dbReference>
<dbReference type="SUPFAM" id="SSF158472">
    <property type="entry name" value="HAMP domain-like"/>
    <property type="match status" value="1"/>
</dbReference>
<dbReference type="SUPFAM" id="SSF47384">
    <property type="entry name" value="Homodimeric domain of signal transducing histidine kinase"/>
    <property type="match status" value="1"/>
</dbReference>
<dbReference type="PROSITE" id="PS50885">
    <property type="entry name" value="HAMP"/>
    <property type="match status" value="1"/>
</dbReference>
<dbReference type="PROSITE" id="PS50109">
    <property type="entry name" value="HIS_KIN"/>
    <property type="match status" value="1"/>
</dbReference>